<organism>
    <name type="scientific">Lophosiphonia boldii</name>
    <name type="common">Red alga</name>
    <name type="synonym">Polysiphonia boldii</name>
    <dbReference type="NCBI Taxonomy" id="2805"/>
    <lineage>
        <taxon>Eukaryota</taxon>
        <taxon>Rhodophyta</taxon>
        <taxon>Florideophyceae</taxon>
        <taxon>Rhodymeniophycidae</taxon>
        <taxon>Ceramiales</taxon>
        <taxon>Rhodomelaceae</taxon>
        <taxon>Polysiphonioideae</taxon>
        <taxon>Lophosiphonia</taxon>
    </lineage>
</organism>
<sequence length="177" mass="18721">MLDAFSRVVVNSDSKAAYVSGSDLQALKTFINDGNKRLDAVNYIVSNSSCIVSDAISGMICENPGLITPGGNCYTNRRMAACLRDGEIILRYVSYALLAGDASVLEDRCLNGLKETYIALGVPTNSTVRAVSIMKAAAVCFISNTASQRKVEVIEGDCSALASEVASYCDRVVAAVS</sequence>
<keyword id="KW-0042">Antenna complex</keyword>
<keyword id="KW-0089">Bile pigment</keyword>
<keyword id="KW-0150">Chloroplast</keyword>
<keyword id="KW-0157">Chromophore</keyword>
<keyword id="KW-0249">Electron transport</keyword>
<keyword id="KW-0472">Membrane</keyword>
<keyword id="KW-0488">Methylation</keyword>
<keyword id="KW-0602">Photosynthesis</keyword>
<keyword id="KW-0605">Phycobilisome</keyword>
<keyword id="KW-0934">Plastid</keyword>
<keyword id="KW-0793">Thylakoid</keyword>
<keyword id="KW-0813">Transport</keyword>
<gene>
    <name type="primary">cpeB</name>
    <name type="synonym">rpeB</name>
</gene>
<proteinExistence type="evidence at protein level"/>
<evidence type="ECO:0000250" key="1"/>
<evidence type="ECO:0000305" key="2"/>
<name>PHEB_LOPBO</name>
<reference key="1">
    <citation type="journal article" date="1993" name="Plant Mol. Biol.">
        <title>Organization, expression and nucleotide sequence of the operon encoding R-phycoerythrin alpha and beta subunits from the red alga Polysiphonia boldii.</title>
        <authorList>
            <person name="Roell M.K."/>
            <person name="Morse D.E."/>
        </authorList>
    </citation>
    <scope>NUCLEOTIDE SEQUENCE [GENOMIC DNA]</scope>
</reference>
<comment type="function">
    <text>Light-harvesting photosynthetic bile pigment-protein from the phycobiliprotein complex.</text>
</comment>
<comment type="biophysicochemical properties">
    <absorption>
        <max>566 nm</max>
        <text>Exhibits two smaller absorbance peaks at 544 nm and 495 nm.</text>
    </absorption>
</comment>
<comment type="subunit">
    <text>Heterodimer of an alpha and a beta chain.</text>
</comment>
<comment type="subcellular location">
    <subcellularLocation>
        <location evidence="1">Plastid</location>
        <location evidence="1">Chloroplast thylakoid membrane</location>
        <topology evidence="1">Peripheral membrane protein</topology>
        <orientation evidence="1">Stromal side</orientation>
    </subcellularLocation>
    <text evidence="1">Forms the periphery of the phycobilisome rod.</text>
</comment>
<comment type="PTM">
    <text evidence="1">Contains two covalently linked phycoerythrobilin chromophores and one covalently linked phycourobilin chromophore.</text>
</comment>
<comment type="similarity">
    <text evidence="2">Belongs to the phycobiliprotein family.</text>
</comment>
<accession>Q01922</accession>
<geneLocation type="chloroplast"/>
<protein>
    <recommendedName>
        <fullName>R-phycoerythrin beta chain</fullName>
    </recommendedName>
</protein>
<dbReference type="EMBL" id="Z14094">
    <property type="protein sequence ID" value="CAA78477.1"/>
    <property type="molecule type" value="Genomic_DNA"/>
</dbReference>
<dbReference type="PIR" id="S30932">
    <property type="entry name" value="S30932"/>
</dbReference>
<dbReference type="SMR" id="Q01922"/>
<dbReference type="GO" id="GO:0009535">
    <property type="term" value="C:chloroplast thylakoid membrane"/>
    <property type="evidence" value="ECO:0007669"/>
    <property type="project" value="UniProtKB-SubCell"/>
</dbReference>
<dbReference type="GO" id="GO:0030089">
    <property type="term" value="C:phycobilisome"/>
    <property type="evidence" value="ECO:0007669"/>
    <property type="project" value="UniProtKB-KW"/>
</dbReference>
<dbReference type="GO" id="GO:0015979">
    <property type="term" value="P:photosynthesis"/>
    <property type="evidence" value="ECO:0007669"/>
    <property type="project" value="UniProtKB-KW"/>
</dbReference>
<dbReference type="CDD" id="cd14767">
    <property type="entry name" value="PE_beta-like"/>
    <property type="match status" value="1"/>
</dbReference>
<dbReference type="Gene3D" id="1.10.490.20">
    <property type="entry name" value="Phycocyanins"/>
    <property type="match status" value="1"/>
</dbReference>
<dbReference type="InterPro" id="IPR009050">
    <property type="entry name" value="Globin-like_sf"/>
</dbReference>
<dbReference type="InterPro" id="IPR012128">
    <property type="entry name" value="Phycobilisome_asu/bsu"/>
</dbReference>
<dbReference type="InterPro" id="IPR038719">
    <property type="entry name" value="Phycobilisome_asu/bsu_sf"/>
</dbReference>
<dbReference type="PANTHER" id="PTHR34011:SF7">
    <property type="entry name" value="C-PHYCOCYANIN BETA SUBUNIT"/>
    <property type="match status" value="1"/>
</dbReference>
<dbReference type="PANTHER" id="PTHR34011">
    <property type="entry name" value="PHYCOBILISOME 32.1 KDA LINKER POLYPEPTIDE, PHYCOCYANIN-ASSOCIATED, ROD 2-RELATED"/>
    <property type="match status" value="1"/>
</dbReference>
<dbReference type="Pfam" id="PF00502">
    <property type="entry name" value="Phycobilisome"/>
    <property type="match status" value="1"/>
</dbReference>
<dbReference type="PIRSF" id="PIRSF000081">
    <property type="entry name" value="Phycocyanin"/>
    <property type="match status" value="1"/>
</dbReference>
<dbReference type="SUPFAM" id="SSF46458">
    <property type="entry name" value="Globin-like"/>
    <property type="match status" value="1"/>
</dbReference>
<feature type="chain" id="PRO_0000199193" description="R-phycoerythrin beta chain">
    <location>
        <begin position="1"/>
        <end position="177"/>
    </location>
</feature>
<feature type="binding site" description="covalent" evidence="1">
    <location>
        <position position="50"/>
    </location>
    <ligand>
        <name>phycourobilin</name>
        <dbReference type="ChEBI" id="CHEBI:189062"/>
    </ligand>
</feature>
<feature type="binding site" description="covalent" evidence="1">
    <location>
        <position position="61"/>
    </location>
    <ligand>
        <name>phycourobilin</name>
        <dbReference type="ChEBI" id="CHEBI:189062"/>
    </ligand>
</feature>
<feature type="binding site" description="covalent" evidence="1">
    <location>
        <position position="82"/>
    </location>
    <ligand>
        <name>(2R,3E)-phycoerythrobilin</name>
        <dbReference type="ChEBI" id="CHEBI:85276"/>
        <label>1</label>
    </ligand>
</feature>
<feature type="binding site" description="covalent" evidence="1">
    <location>
        <position position="158"/>
    </location>
    <ligand>
        <name>(2R,3E)-phycoerythrobilin</name>
        <dbReference type="ChEBI" id="CHEBI:85276"/>
        <label>2</label>
    </ligand>
</feature>
<feature type="modified residue" description="N4-methylasparagine" evidence="1">
    <location>
        <position position="72"/>
    </location>
</feature>